<organism>
    <name type="scientific">Coxiella burnetii (strain Dugway 5J108-111)</name>
    <dbReference type="NCBI Taxonomy" id="434922"/>
    <lineage>
        <taxon>Bacteria</taxon>
        <taxon>Pseudomonadati</taxon>
        <taxon>Pseudomonadota</taxon>
        <taxon>Gammaproteobacteria</taxon>
        <taxon>Legionellales</taxon>
        <taxon>Coxiellaceae</taxon>
        <taxon>Coxiella</taxon>
    </lineage>
</organism>
<comment type="catalytic activity">
    <reaction evidence="1">
        <text>(S)-2,3,4,5-tetrahydrodipicolinate + succinyl-CoA + H2O = (S)-2-succinylamino-6-oxoheptanedioate + CoA</text>
        <dbReference type="Rhea" id="RHEA:17325"/>
        <dbReference type="ChEBI" id="CHEBI:15377"/>
        <dbReference type="ChEBI" id="CHEBI:15685"/>
        <dbReference type="ChEBI" id="CHEBI:16845"/>
        <dbReference type="ChEBI" id="CHEBI:57287"/>
        <dbReference type="ChEBI" id="CHEBI:57292"/>
        <dbReference type="EC" id="2.3.1.117"/>
    </reaction>
</comment>
<comment type="pathway">
    <text evidence="1">Amino-acid biosynthesis; L-lysine biosynthesis via DAP pathway; LL-2,6-diaminopimelate from (S)-tetrahydrodipicolinate (succinylase route): step 1/3.</text>
</comment>
<comment type="subunit">
    <text evidence="1">Homotrimer.</text>
</comment>
<comment type="subcellular location">
    <subcellularLocation>
        <location evidence="1">Cytoplasm</location>
    </subcellularLocation>
</comment>
<comment type="similarity">
    <text evidence="1">Belongs to the transferase hexapeptide repeat family.</text>
</comment>
<proteinExistence type="inferred from homology"/>
<feature type="chain" id="PRO_1000083748" description="2,3,4,5-tetrahydropyridine-2,6-dicarboxylate N-succinyltransferase">
    <location>
        <begin position="1"/>
        <end position="271"/>
    </location>
</feature>
<feature type="binding site" evidence="1">
    <location>
        <position position="102"/>
    </location>
    <ligand>
        <name>substrate</name>
    </ligand>
</feature>
<feature type="binding site" evidence="1">
    <location>
        <position position="139"/>
    </location>
    <ligand>
        <name>substrate</name>
    </ligand>
</feature>
<dbReference type="EC" id="2.3.1.117" evidence="1"/>
<dbReference type="EMBL" id="CP000733">
    <property type="protein sequence ID" value="ABS78492.1"/>
    <property type="molecule type" value="Genomic_DNA"/>
</dbReference>
<dbReference type="RefSeq" id="WP_011996680.1">
    <property type="nucleotide sequence ID" value="NC_009727.1"/>
</dbReference>
<dbReference type="SMR" id="A9KC83"/>
<dbReference type="KEGG" id="cbd:CBUD_0677"/>
<dbReference type="HOGENOM" id="CLU_050859_0_1_6"/>
<dbReference type="UniPathway" id="UPA00034">
    <property type="reaction ID" value="UER00019"/>
</dbReference>
<dbReference type="Proteomes" id="UP000008555">
    <property type="component" value="Chromosome"/>
</dbReference>
<dbReference type="GO" id="GO:0005737">
    <property type="term" value="C:cytoplasm"/>
    <property type="evidence" value="ECO:0007669"/>
    <property type="project" value="UniProtKB-SubCell"/>
</dbReference>
<dbReference type="GO" id="GO:0008666">
    <property type="term" value="F:2,3,4,5-tetrahydropyridine-2,6-dicarboxylate N-succinyltransferase activity"/>
    <property type="evidence" value="ECO:0007669"/>
    <property type="project" value="UniProtKB-UniRule"/>
</dbReference>
<dbReference type="GO" id="GO:0019877">
    <property type="term" value="P:diaminopimelate biosynthetic process"/>
    <property type="evidence" value="ECO:0007669"/>
    <property type="project" value="UniProtKB-UniRule"/>
</dbReference>
<dbReference type="GO" id="GO:0009089">
    <property type="term" value="P:lysine biosynthetic process via diaminopimelate"/>
    <property type="evidence" value="ECO:0007669"/>
    <property type="project" value="UniProtKB-UniRule"/>
</dbReference>
<dbReference type="CDD" id="cd03350">
    <property type="entry name" value="LbH_THP_succinylT"/>
    <property type="match status" value="1"/>
</dbReference>
<dbReference type="Gene3D" id="2.160.10.10">
    <property type="entry name" value="Hexapeptide repeat proteins"/>
    <property type="match status" value="1"/>
</dbReference>
<dbReference type="Gene3D" id="1.10.166.10">
    <property type="entry name" value="Tetrahydrodipicolinate-N-succinyltransferase, N-terminal domain"/>
    <property type="match status" value="1"/>
</dbReference>
<dbReference type="HAMAP" id="MF_00811">
    <property type="entry name" value="DapD"/>
    <property type="match status" value="1"/>
</dbReference>
<dbReference type="InterPro" id="IPR005664">
    <property type="entry name" value="DapD_Trfase_Hexpep_rpt_fam"/>
</dbReference>
<dbReference type="InterPro" id="IPR001451">
    <property type="entry name" value="Hexapep"/>
</dbReference>
<dbReference type="InterPro" id="IPR023180">
    <property type="entry name" value="THP_succinylTrfase_dom1"/>
</dbReference>
<dbReference type="InterPro" id="IPR037133">
    <property type="entry name" value="THP_succinylTrfase_N_sf"/>
</dbReference>
<dbReference type="InterPro" id="IPR050179">
    <property type="entry name" value="Trans_hexapeptide_repeat"/>
</dbReference>
<dbReference type="InterPro" id="IPR011004">
    <property type="entry name" value="Trimer_LpxA-like_sf"/>
</dbReference>
<dbReference type="NCBIfam" id="TIGR00965">
    <property type="entry name" value="dapD"/>
    <property type="match status" value="1"/>
</dbReference>
<dbReference type="NCBIfam" id="NF008808">
    <property type="entry name" value="PRK11830.1"/>
    <property type="match status" value="1"/>
</dbReference>
<dbReference type="PANTHER" id="PTHR43300:SF10">
    <property type="entry name" value="2,3,4,5-TETRAHYDROPYRIDINE-2,6-DICARBOXYLATE N-ACETYLTRANSFERASE"/>
    <property type="match status" value="1"/>
</dbReference>
<dbReference type="PANTHER" id="PTHR43300">
    <property type="entry name" value="ACETYLTRANSFERASE"/>
    <property type="match status" value="1"/>
</dbReference>
<dbReference type="Pfam" id="PF14602">
    <property type="entry name" value="Hexapep_2"/>
    <property type="match status" value="1"/>
</dbReference>
<dbReference type="Pfam" id="PF14805">
    <property type="entry name" value="THDPS_N_2"/>
    <property type="match status" value="1"/>
</dbReference>
<dbReference type="SUPFAM" id="SSF51161">
    <property type="entry name" value="Trimeric LpxA-like enzymes"/>
    <property type="match status" value="1"/>
</dbReference>
<protein>
    <recommendedName>
        <fullName evidence="1">2,3,4,5-tetrahydropyridine-2,6-dicarboxylate N-succinyltransferase</fullName>
        <ecNumber evidence="1">2.3.1.117</ecNumber>
    </recommendedName>
    <alternativeName>
        <fullName evidence="1">Tetrahydrodipicolinate N-succinyltransferase</fullName>
        <shortName evidence="1">THDP succinyltransferase</shortName>
        <shortName evidence="1">THP succinyltransferase</shortName>
        <shortName evidence="1">Tetrahydropicolinate succinylase</shortName>
    </alternativeName>
</protein>
<reference key="1">
    <citation type="journal article" date="2009" name="Infect. Immun.">
        <title>Comparative genomics reveal extensive transposon-mediated genomic plasticity and diversity among potential effector proteins within the genus Coxiella.</title>
        <authorList>
            <person name="Beare P.A."/>
            <person name="Unsworth N."/>
            <person name="Andoh M."/>
            <person name="Voth D.E."/>
            <person name="Omsland A."/>
            <person name="Gilk S.D."/>
            <person name="Williams K.P."/>
            <person name="Sobral B.W."/>
            <person name="Kupko J.J. III"/>
            <person name="Porcella S.F."/>
            <person name="Samuel J.E."/>
            <person name="Heinzen R.A."/>
        </authorList>
    </citation>
    <scope>NUCLEOTIDE SEQUENCE [LARGE SCALE GENOMIC DNA]</scope>
    <source>
        <strain>Dugway 5J108-111</strain>
    </source>
</reference>
<sequence length="271" mass="29822">MTDLKTIIEEAYQNKDSFTTDTVPKKIHQAIHQTIELLDNGELRIAEKQNGQWNTNEWAKMAILLYFKTEPLKTFDAGYTFFYDKIPLKYTNNTSQPQSGVRVVPHAIVRKGAYLAPNTVLMPSYINIGAYVDSGTLIDTWATVGSCAQIGKNVHLSGGAGIGGVLEPLQAHPTIIEDDCFIGARSEIVEGVMVEKGSVISMGVFVGQSTPIYNRQTQEITYGRIPAGSVVIPGSLPSKDGHYNRYSAIIVKQVDEKTRSKVSLNELLREG</sequence>
<keyword id="KW-0012">Acyltransferase</keyword>
<keyword id="KW-0028">Amino-acid biosynthesis</keyword>
<keyword id="KW-0963">Cytoplasm</keyword>
<keyword id="KW-0220">Diaminopimelate biosynthesis</keyword>
<keyword id="KW-0457">Lysine biosynthesis</keyword>
<keyword id="KW-0677">Repeat</keyword>
<keyword id="KW-0808">Transferase</keyword>
<name>DAPD_COXBN</name>
<gene>
    <name evidence="1" type="primary">dapD</name>
    <name type="ordered locus">CBUD_0677</name>
</gene>
<evidence type="ECO:0000255" key="1">
    <source>
        <dbReference type="HAMAP-Rule" id="MF_00811"/>
    </source>
</evidence>
<accession>A9KC83</accession>